<feature type="chain" id="PRO_0000318563" description="p-hydroxybenzoic acid efflux pump subunit AaeA">
    <location>
        <begin position="1"/>
        <end position="310"/>
    </location>
</feature>
<feature type="transmembrane region" description="Helical" evidence="1">
    <location>
        <begin position="12"/>
        <end position="32"/>
    </location>
</feature>
<reference key="1">
    <citation type="journal article" date="2010" name="PLoS ONE">
        <title>Genome sequence of Cronobacter sakazakii BAA-894 and comparative genomic hybridization analysis with other Cronobacter species.</title>
        <authorList>
            <person name="Kucerova E."/>
            <person name="Clifton S.W."/>
            <person name="Xia X.Q."/>
            <person name="Long F."/>
            <person name="Porwollik S."/>
            <person name="Fulton L."/>
            <person name="Fronick C."/>
            <person name="Minx P."/>
            <person name="Kyung K."/>
            <person name="Warren W."/>
            <person name="Fulton R."/>
            <person name="Feng D."/>
            <person name="Wollam A."/>
            <person name="Shah N."/>
            <person name="Bhonagiri V."/>
            <person name="Nash W.E."/>
            <person name="Hallsworth-Pepin K."/>
            <person name="Wilson R.K."/>
            <person name="McClelland M."/>
            <person name="Forsythe S.J."/>
        </authorList>
    </citation>
    <scope>NUCLEOTIDE SEQUENCE [LARGE SCALE GENOMIC DNA]</scope>
    <source>
        <strain>ATCC BAA-894</strain>
    </source>
</reference>
<comment type="function">
    <text evidence="1">Forms an efflux pump with AaeB.</text>
</comment>
<comment type="subcellular location">
    <subcellularLocation>
        <location evidence="1">Cell inner membrane</location>
        <topology evidence="1">Single-pass membrane protein</topology>
    </subcellularLocation>
</comment>
<comment type="similarity">
    <text evidence="1">Belongs to the membrane fusion protein (MFP) (TC 8.A.1) family.</text>
</comment>
<comment type="sequence caution" evidence="2">
    <conflict type="erroneous initiation">
        <sequence resource="EMBL-CDS" id="ABU78839"/>
    </conflict>
</comment>
<dbReference type="EMBL" id="CP000783">
    <property type="protein sequence ID" value="ABU78839.1"/>
    <property type="status" value="ALT_INIT"/>
    <property type="molecule type" value="Genomic_DNA"/>
</dbReference>
<dbReference type="RefSeq" id="WP_014729772.1">
    <property type="nucleotide sequence ID" value="NC_009778.1"/>
</dbReference>
<dbReference type="SMR" id="A7MJB1"/>
<dbReference type="KEGG" id="esa:ESA_03629"/>
<dbReference type="PATRIC" id="fig|290339.8.peg.3233"/>
<dbReference type="HOGENOM" id="CLU_018816_15_2_6"/>
<dbReference type="Proteomes" id="UP000000260">
    <property type="component" value="Chromosome"/>
</dbReference>
<dbReference type="GO" id="GO:0005886">
    <property type="term" value="C:plasma membrane"/>
    <property type="evidence" value="ECO:0007669"/>
    <property type="project" value="UniProtKB-SubCell"/>
</dbReference>
<dbReference type="GO" id="GO:0022857">
    <property type="term" value="F:transmembrane transporter activity"/>
    <property type="evidence" value="ECO:0007669"/>
    <property type="project" value="UniProtKB-UniRule"/>
</dbReference>
<dbReference type="Gene3D" id="2.40.30.170">
    <property type="match status" value="1"/>
</dbReference>
<dbReference type="Gene3D" id="2.40.50.100">
    <property type="match status" value="1"/>
</dbReference>
<dbReference type="HAMAP" id="MF_01544">
    <property type="entry name" value="AaeA"/>
    <property type="match status" value="1"/>
</dbReference>
<dbReference type="InterPro" id="IPR043602">
    <property type="entry name" value="CusB-like_dom_1"/>
</dbReference>
<dbReference type="InterPro" id="IPR032317">
    <property type="entry name" value="CusB_D23"/>
</dbReference>
<dbReference type="InterPro" id="IPR050393">
    <property type="entry name" value="MFP_Efflux_Pump"/>
</dbReference>
<dbReference type="InterPro" id="IPR022871">
    <property type="entry name" value="PHBA_efflux_pump_AaeA"/>
</dbReference>
<dbReference type="InterPro" id="IPR006143">
    <property type="entry name" value="RND_pump_MFP"/>
</dbReference>
<dbReference type="NCBIfam" id="NF007850">
    <property type="entry name" value="PRK10559.1"/>
    <property type="match status" value="1"/>
</dbReference>
<dbReference type="NCBIfam" id="TIGR01730">
    <property type="entry name" value="RND_mfp"/>
    <property type="match status" value="1"/>
</dbReference>
<dbReference type="PANTHER" id="PTHR30367:SF12">
    <property type="entry name" value="P-HYDROXYBENZOIC ACID EFFLUX PUMP SUBUNIT AAEA"/>
    <property type="match status" value="1"/>
</dbReference>
<dbReference type="PANTHER" id="PTHR30367">
    <property type="entry name" value="P-HYDROXYBENZOIC ACID EFFLUX PUMP SUBUNIT AAEA-RELATED"/>
    <property type="match status" value="1"/>
</dbReference>
<dbReference type="Pfam" id="PF00529">
    <property type="entry name" value="CusB_dom_1"/>
    <property type="match status" value="1"/>
</dbReference>
<dbReference type="Pfam" id="PF16576">
    <property type="entry name" value="HlyD_D23"/>
    <property type="match status" value="1"/>
</dbReference>
<dbReference type="SUPFAM" id="SSF111369">
    <property type="entry name" value="HlyD-like secretion proteins"/>
    <property type="match status" value="1"/>
</dbReference>
<organism>
    <name type="scientific">Cronobacter sakazakii (strain ATCC BAA-894)</name>
    <name type="common">Enterobacter sakazakii</name>
    <dbReference type="NCBI Taxonomy" id="290339"/>
    <lineage>
        <taxon>Bacteria</taxon>
        <taxon>Pseudomonadati</taxon>
        <taxon>Pseudomonadota</taxon>
        <taxon>Gammaproteobacteria</taxon>
        <taxon>Enterobacterales</taxon>
        <taxon>Enterobacteriaceae</taxon>
        <taxon>Cronobacter</taxon>
    </lineage>
</organism>
<sequence>MKLLTTKITRTAITVVLVVLAFIAIFRAWSFYTESPWTRDARFSADVVAIAPDVAGLITSVDVHDNQLVKKDQVLFTIDQPRYQKALEEAEADVAYYQALANEKRREAGRRNQLGVQAMSREEIDQANNVLQTVLHQLAKAEATRDLAKLDLQRTVIRAPADGWVTNLNVYTGEFITRGSTAVALVKQNSFYVQAYMEETKLEGVRPGFRVEITPLGSNNVLHGTVDSVSAGVTNASSTRDAKGMATVDSNLEWVRLAQRVPVRIRLDKQPGNLYPAGTTATVVVTGERDRDRSQESAFNKLMHRLREFG</sequence>
<protein>
    <recommendedName>
        <fullName evidence="1">p-hydroxybenzoic acid efflux pump subunit AaeA</fullName>
        <shortName evidence="1">pHBA efflux pump protein A</shortName>
    </recommendedName>
</protein>
<name>AAEA_CROS8</name>
<accession>A7MJB1</accession>
<gene>
    <name evidence="1" type="primary">aaeA</name>
    <name type="ordered locus">ESA_03629</name>
</gene>
<evidence type="ECO:0000255" key="1">
    <source>
        <dbReference type="HAMAP-Rule" id="MF_01544"/>
    </source>
</evidence>
<evidence type="ECO:0000305" key="2"/>
<proteinExistence type="inferred from homology"/>
<keyword id="KW-0997">Cell inner membrane</keyword>
<keyword id="KW-1003">Cell membrane</keyword>
<keyword id="KW-0472">Membrane</keyword>
<keyword id="KW-1185">Reference proteome</keyword>
<keyword id="KW-0812">Transmembrane</keyword>
<keyword id="KW-1133">Transmembrane helix</keyword>
<keyword id="KW-0813">Transport</keyword>